<gene>
    <name type="primary">RPL37A</name>
    <name type="synonym">RPL43</name>
    <name type="ORF">TTHERM_00075670</name>
</gene>
<accession>Q23G98</accession>
<evidence type="ECO:0000305" key="1"/>
<protein>
    <recommendedName>
        <fullName evidence="1">Large ribosomal subunit protein eL43</fullName>
    </recommendedName>
    <alternativeName>
        <fullName>60S ribosomal protein L37a</fullName>
    </alternativeName>
</protein>
<proteinExistence type="evidence at protein level"/>
<comment type="similarity">
    <text evidence="1">Belongs to the eukaryotic ribosomal protein eL43 family.</text>
</comment>
<name>RL37A_TETTS</name>
<sequence>MAKRTQKVGITRKYGTRYGASLRKVVKKFEITQHAKYGCPFCGKVAVKRAAVGIWKCKPCKKIIAGGAWELTTPPAVTAKTTMNRLKKLQEEQAAAAALEKKN</sequence>
<feature type="chain" id="PRO_0000413527" description="Large ribosomal subunit protein eL43">
    <location>
        <begin position="1"/>
        <end position="103"/>
    </location>
</feature>
<keyword id="KW-0002">3D-structure</keyword>
<keyword id="KW-1185">Reference proteome</keyword>
<keyword id="KW-0687">Ribonucleoprotein</keyword>
<keyword id="KW-0689">Ribosomal protein</keyword>
<organism>
    <name type="scientific">Tetrahymena thermophila (strain SB210)</name>
    <dbReference type="NCBI Taxonomy" id="312017"/>
    <lineage>
        <taxon>Eukaryota</taxon>
        <taxon>Sar</taxon>
        <taxon>Alveolata</taxon>
        <taxon>Ciliophora</taxon>
        <taxon>Intramacronucleata</taxon>
        <taxon>Oligohymenophorea</taxon>
        <taxon>Hymenostomatida</taxon>
        <taxon>Tetrahymenina</taxon>
        <taxon>Tetrahymenidae</taxon>
        <taxon>Tetrahymena</taxon>
    </lineage>
</organism>
<dbReference type="EMBL" id="GG662704">
    <property type="protein sequence ID" value="EAR95362.1"/>
    <property type="molecule type" value="Genomic_DNA"/>
</dbReference>
<dbReference type="RefSeq" id="XP_001015607.1">
    <property type="nucleotide sequence ID" value="XM_001015607.3"/>
</dbReference>
<dbReference type="PDB" id="4V8P">
    <property type="method" value="X-ray"/>
    <property type="resolution" value="3.52 A"/>
    <property type="chains" value="BY/CY/EY/GY=1-103"/>
</dbReference>
<dbReference type="PDBsum" id="4V8P"/>
<dbReference type="SMR" id="Q23G98"/>
<dbReference type="IntAct" id="Q23G98">
    <property type="interactions" value="1"/>
</dbReference>
<dbReference type="STRING" id="312017.Q23G98"/>
<dbReference type="EnsemblProtists" id="EAR95362">
    <property type="protein sequence ID" value="EAR95362"/>
    <property type="gene ID" value="TTHERM_00075670"/>
</dbReference>
<dbReference type="GeneID" id="7842824"/>
<dbReference type="KEGG" id="tet:TTHERM_00075670"/>
<dbReference type="eggNOG" id="KOG0402">
    <property type="taxonomic scope" value="Eukaryota"/>
</dbReference>
<dbReference type="HOGENOM" id="CLU_141199_1_0_1"/>
<dbReference type="InParanoid" id="Q23G98"/>
<dbReference type="OMA" id="GPRYGRK"/>
<dbReference type="OrthoDB" id="308782at2759"/>
<dbReference type="Proteomes" id="UP000009168">
    <property type="component" value="Unassembled WGS sequence"/>
</dbReference>
<dbReference type="GO" id="GO:1990904">
    <property type="term" value="C:ribonucleoprotein complex"/>
    <property type="evidence" value="ECO:0007669"/>
    <property type="project" value="UniProtKB-KW"/>
</dbReference>
<dbReference type="GO" id="GO:0005840">
    <property type="term" value="C:ribosome"/>
    <property type="evidence" value="ECO:0007669"/>
    <property type="project" value="UniProtKB-KW"/>
</dbReference>
<dbReference type="GO" id="GO:0003735">
    <property type="term" value="F:structural constituent of ribosome"/>
    <property type="evidence" value="ECO:0007669"/>
    <property type="project" value="InterPro"/>
</dbReference>
<dbReference type="GO" id="GO:0006412">
    <property type="term" value="P:translation"/>
    <property type="evidence" value="ECO:0007669"/>
    <property type="project" value="InterPro"/>
</dbReference>
<dbReference type="Gene3D" id="2.20.25.30">
    <property type="match status" value="1"/>
</dbReference>
<dbReference type="HAMAP" id="MF_00327">
    <property type="entry name" value="Ribosomal_eL43"/>
    <property type="match status" value="1"/>
</dbReference>
<dbReference type="InterPro" id="IPR011331">
    <property type="entry name" value="Ribosomal_eL37/eL43"/>
</dbReference>
<dbReference type="InterPro" id="IPR002674">
    <property type="entry name" value="Ribosomal_eL43"/>
</dbReference>
<dbReference type="InterPro" id="IPR050522">
    <property type="entry name" value="Ribosomal_protein_eL43"/>
</dbReference>
<dbReference type="InterPro" id="IPR011332">
    <property type="entry name" value="Ribosomal_zn-bd"/>
</dbReference>
<dbReference type="NCBIfam" id="TIGR00280">
    <property type="entry name" value="eL43_euk_arch"/>
    <property type="match status" value="1"/>
</dbReference>
<dbReference type="PANTHER" id="PTHR48129">
    <property type="entry name" value="60S RIBOSOMAL PROTEIN L37A"/>
    <property type="match status" value="1"/>
</dbReference>
<dbReference type="PANTHER" id="PTHR48129:SF1">
    <property type="entry name" value="LARGE RIBOSOMAL SUBUNIT PROTEIN EL43"/>
    <property type="match status" value="1"/>
</dbReference>
<dbReference type="Pfam" id="PF01780">
    <property type="entry name" value="Ribosomal_L37ae"/>
    <property type="match status" value="1"/>
</dbReference>
<dbReference type="SUPFAM" id="SSF57829">
    <property type="entry name" value="Zn-binding ribosomal proteins"/>
    <property type="match status" value="1"/>
</dbReference>
<reference key="1">
    <citation type="journal article" date="2006" name="PLoS Biol.">
        <title>Macronuclear genome sequence of the ciliate Tetrahymena thermophila, a model eukaryote.</title>
        <authorList>
            <person name="Eisen J.A."/>
            <person name="Coyne R.S."/>
            <person name="Wu M."/>
            <person name="Wu D."/>
            <person name="Thiagarajan M."/>
            <person name="Wortman J.R."/>
            <person name="Badger J.H."/>
            <person name="Ren Q."/>
            <person name="Amedeo P."/>
            <person name="Jones K.M."/>
            <person name="Tallon L.J."/>
            <person name="Delcher A.L."/>
            <person name="Salzberg S.L."/>
            <person name="Silva J.C."/>
            <person name="Haas B.J."/>
            <person name="Majoros W.H."/>
            <person name="Farzad M."/>
            <person name="Carlton J.M."/>
            <person name="Smith R.K. Jr."/>
            <person name="Garg J."/>
            <person name="Pearlman R.E."/>
            <person name="Karrer K.M."/>
            <person name="Sun L."/>
            <person name="Manning G."/>
            <person name="Elde N.C."/>
            <person name="Turkewitz A.P."/>
            <person name="Asai D.J."/>
            <person name="Wilkes D.E."/>
            <person name="Wang Y."/>
            <person name="Cai H."/>
            <person name="Collins K."/>
            <person name="Stewart B.A."/>
            <person name="Lee S.R."/>
            <person name="Wilamowska K."/>
            <person name="Weinberg Z."/>
            <person name="Ruzzo W.L."/>
            <person name="Wloga D."/>
            <person name="Gaertig J."/>
            <person name="Frankel J."/>
            <person name="Tsao C.-C."/>
            <person name="Gorovsky M.A."/>
            <person name="Keeling P.J."/>
            <person name="Waller R.F."/>
            <person name="Patron N.J."/>
            <person name="Cherry J.M."/>
            <person name="Stover N.A."/>
            <person name="Krieger C.J."/>
            <person name="del Toro C."/>
            <person name="Ryder H.F."/>
            <person name="Williamson S.C."/>
            <person name="Barbeau R.A."/>
            <person name="Hamilton E.P."/>
            <person name="Orias E."/>
        </authorList>
    </citation>
    <scope>NUCLEOTIDE SEQUENCE [LARGE SCALE GENOMIC DNA]</scope>
    <source>
        <strain>SB210</strain>
    </source>
</reference>